<gene>
    <name evidence="6" type="primary">Chpf</name>
    <name type="synonym">Css2</name>
    <name type="synonym">D1Bwg1363e</name>
</gene>
<organism>
    <name type="scientific">Mus musculus</name>
    <name type="common">Mouse</name>
    <dbReference type="NCBI Taxonomy" id="10090"/>
    <lineage>
        <taxon>Eukaryota</taxon>
        <taxon>Metazoa</taxon>
        <taxon>Chordata</taxon>
        <taxon>Craniata</taxon>
        <taxon>Vertebrata</taxon>
        <taxon>Euteleostomi</taxon>
        <taxon>Mammalia</taxon>
        <taxon>Eutheria</taxon>
        <taxon>Euarchontoglires</taxon>
        <taxon>Glires</taxon>
        <taxon>Rodentia</taxon>
        <taxon>Myomorpha</taxon>
        <taxon>Muroidea</taxon>
        <taxon>Muridae</taxon>
        <taxon>Murinae</taxon>
        <taxon>Mus</taxon>
        <taxon>Mus</taxon>
    </lineage>
</organism>
<evidence type="ECO:0000250" key="1">
    <source>
        <dbReference type="UniProtKB" id="Q8IZ52"/>
    </source>
</evidence>
<evidence type="ECO:0000255" key="2"/>
<evidence type="ECO:0000256" key="3">
    <source>
        <dbReference type="SAM" id="MobiDB-lite"/>
    </source>
</evidence>
<evidence type="ECO:0000269" key="4">
    <source>
    </source>
</evidence>
<evidence type="ECO:0000305" key="5"/>
<evidence type="ECO:0000312" key="6">
    <source>
        <dbReference type="MGI" id="MGI:106576"/>
    </source>
</evidence>
<name>CHSS2_MOUSE</name>
<feature type="chain" id="PRO_0000189561" description="Chondroitin sulfate synthase 2">
    <location>
        <begin position="1"/>
        <end position="774"/>
    </location>
</feature>
<feature type="topological domain" description="Cytoplasmic" evidence="2">
    <location>
        <begin position="1"/>
        <end position="15"/>
    </location>
</feature>
<feature type="transmembrane region" description="Helical; Signal-anchor for type II membrane protein" evidence="2">
    <location>
        <begin position="16"/>
        <end position="34"/>
    </location>
</feature>
<feature type="topological domain" description="Lumenal" evidence="2">
    <location>
        <begin position="35"/>
        <end position="774"/>
    </location>
</feature>
<feature type="region of interest" description="Disordered" evidence="3">
    <location>
        <begin position="37"/>
        <end position="103"/>
    </location>
</feature>
<feature type="compositionally biased region" description="Polar residues" evidence="3">
    <location>
        <begin position="54"/>
        <end position="67"/>
    </location>
</feature>
<feature type="binding site" evidence="2">
    <location>
        <position position="616"/>
    </location>
    <ligand>
        <name>a divalent metal cation</name>
        <dbReference type="ChEBI" id="CHEBI:60240"/>
    </ligand>
</feature>
<feature type="glycosylation site" description="N-linked (GlcNAc...) asparagine" evidence="2">
    <location>
        <position position="138"/>
    </location>
</feature>
<feature type="glycosylation site" description="N-linked (GlcNAc...) asparagine" evidence="2">
    <location>
        <position position="361"/>
    </location>
</feature>
<feature type="splice variant" id="VSP_053435" description="In isoform 2." evidence="5">
    <location>
        <begin position="1"/>
        <end position="460"/>
    </location>
</feature>
<feature type="splice variant" id="VSP_053436" description="In isoform 3." evidence="5">
    <location>
        <begin position="1"/>
        <end position="162"/>
    </location>
</feature>
<protein>
    <recommendedName>
        <fullName evidence="5">Chondroitin sulfate synthase 2</fullName>
        <ecNumber evidence="1">2.4.1.175</ecNumber>
        <ecNumber evidence="1">2.4.1.226</ecNumber>
    </recommendedName>
    <alternativeName>
        <fullName>Chondroitin glucuronyltransferase 2</fullName>
    </alternativeName>
    <alternativeName>
        <fullName>Chondroitin-polymerizing factor</fullName>
        <shortName>ChPF</shortName>
    </alternativeName>
    <alternativeName>
        <fullName>Glucuronosyl-N-acetylgalactosaminyl-proteoglycan 4-beta-N-acetylgalactosaminyltransferase II</fullName>
    </alternativeName>
    <alternativeName>
        <fullName>N-acetylgalactosaminyl-proteoglycan 3-beta-glucuronosyltransferase II</fullName>
    </alternativeName>
    <alternativeName>
        <fullName>N-acetylgalactosaminyltransferase 2</fullName>
    </alternativeName>
</protein>
<accession>Q6IQX7</accession>
<accession>E9PUB9</accession>
<comment type="function">
    <text evidence="1">Has both beta-1,3-glucuronic acid and beta-1,4-N-acetylgalactosamine transferase activity. Transfers glucuronic acid (GlcUA) from UDP-GlcUA and N-acetylgalactosamine (GalNAc) from UDP-GalNAc to the non-reducing end of the elongating chondroitin polymer. Seems to act as a specific activating factor for CHSY1 in chondroitin polymerization.</text>
</comment>
<comment type="function">
    <molecule>Isoform 2</molecule>
    <text evidence="1">May facilitate PRKN transport into the mitochondria. In collaboration with PRKN, may enhance cell viability and protect cells from oxidative stress.</text>
</comment>
<comment type="catalytic activity">
    <reaction evidence="1">
        <text>3-O-(beta-D-GlcA-(1-&gt;3)-beta-D-GalNAc-(1-&gt;4)-beta-D-GlcA-(1-&gt;3)-beta-D-Gal-(1-&gt;3)-beta-D-Gal-(1-&gt;4)-beta-D-Xyl)-L-seryl-[protein] + UDP-N-acetyl-alpha-D-galactosamine = 3-O-(beta-D-GalNAc-(1-&gt;4)-beta-D-GlcA-(1-&gt;3)-beta-D-GalNAc-(1-&gt;4)-beta-D-GlcA-(1-&gt;3)-beta-D-Gal-(1-&gt;3)-beta-D-Gal-(1-&gt;4)-beta-D-Xyl)-L-seryl-[protein] + UDP + H(+)</text>
        <dbReference type="Rhea" id="RHEA:20800"/>
        <dbReference type="Rhea" id="RHEA-COMP:14058"/>
        <dbReference type="Rhea" id="RHEA-COMP:14059"/>
        <dbReference type="ChEBI" id="CHEBI:15378"/>
        <dbReference type="ChEBI" id="CHEBI:58223"/>
        <dbReference type="ChEBI" id="CHEBI:67138"/>
        <dbReference type="ChEBI" id="CHEBI:138442"/>
        <dbReference type="ChEBI" id="CHEBI:138443"/>
        <dbReference type="EC" id="2.4.1.175"/>
    </reaction>
    <physiologicalReaction direction="left-to-right" evidence="1">
        <dbReference type="Rhea" id="RHEA:20801"/>
    </physiologicalReaction>
</comment>
<comment type="catalytic activity">
    <reaction evidence="1">
        <text>3-O-{beta-D-GlcA-(1-&gt;3)-[beta-D-GalNAc-(1-&gt;4)-beta-D-GlcA-(1-&gt;3)](n)-beta-D-GalNAc-(1-&gt;4)-beta-D-GlcA-(1-&gt;3)-beta-D-Gal-(1-&gt;3)-beta-D-Gal-(1-&gt;4)-beta-D-Xyl}-L-seryl-[protein] + UDP-N-acetyl-alpha-D-galactosamine = 3-O-{[beta-D-GalNAc-(1-&gt;4)-beta-D-GlcA-(1-&gt;3)](n+1)-beta-D-GalNAc-(1-&gt;4)-beta-D-GlcA-(1-&gt;3)-beta-D-Gal-(1-&gt;3)-beta-D-Gal-(1-&gt;4)-beta-D-Xyl}-L-seryl-[protein] + UDP + H(+)</text>
        <dbReference type="Rhea" id="RHEA:55000"/>
        <dbReference type="Rhea" id="RHEA-COMP:14060"/>
        <dbReference type="Rhea" id="RHEA-COMP:14301"/>
        <dbReference type="ChEBI" id="CHEBI:15378"/>
        <dbReference type="ChEBI" id="CHEBI:58223"/>
        <dbReference type="ChEBI" id="CHEBI:67138"/>
        <dbReference type="ChEBI" id="CHEBI:138444"/>
        <dbReference type="ChEBI" id="CHEBI:138445"/>
        <dbReference type="EC" id="2.4.1.175"/>
    </reaction>
    <physiologicalReaction direction="left-to-right" evidence="1">
        <dbReference type="Rhea" id="RHEA:55001"/>
    </physiologicalReaction>
</comment>
<comment type="catalytic activity">
    <reaction evidence="1">
        <text>3-O-(beta-D-GalNAc-(1-&gt;4)-beta-D-GlcA-(1-&gt;3)-beta-D-Gal-(1-&gt;3)-beta-D-Gal-(1-&gt;4)-beta-D-Xyl)-L-seryl-[protein] + UDP-alpha-D-glucuronate = 3-O-(beta-D-GlcA-(1-&gt;3)-beta-D-GalNAc-(1-&gt;4)-beta-D-GlcA-(1-&gt;3)-beta-D-Gal-(1-&gt;3)-beta-D-Gal-(1-&gt;4)-beta-D-Xyl)-L-seryl-[protein] + UDP + H(+)</text>
        <dbReference type="Rhea" id="RHEA:23428"/>
        <dbReference type="Rhea" id="RHEA-COMP:12575"/>
        <dbReference type="Rhea" id="RHEA-COMP:14058"/>
        <dbReference type="ChEBI" id="CHEBI:15378"/>
        <dbReference type="ChEBI" id="CHEBI:58052"/>
        <dbReference type="ChEBI" id="CHEBI:58223"/>
        <dbReference type="ChEBI" id="CHEBI:132105"/>
        <dbReference type="ChEBI" id="CHEBI:138442"/>
        <dbReference type="EC" id="2.4.1.226"/>
    </reaction>
    <physiologicalReaction direction="left-to-right" evidence="1">
        <dbReference type="Rhea" id="RHEA:23429"/>
    </physiologicalReaction>
</comment>
<comment type="catalytic activity">
    <reaction evidence="1">
        <text>3-O-{[beta-D-GalNAc-(1-&gt;4)-beta-D-GlcA-(1-&gt;3)](n)-beta-D-GalNAc-(1-&gt;4)-beta-D-GlcA-(1-&gt;3)-beta-D-Gal-(1-&gt;3)-beta-D-Gal-(1-&gt;4)-beta-D-Xyl}-L-seryl-[protein] + UDP-alpha-D-glucuronate = 3-O-{beta-D-GlcA-(1-&gt;3)-[beta-D-GalNAc-(1-&gt;4)-beta-D-GlcA-(1-&gt;3)](n)-beta-D-GalNAc-(1-&gt;4)-beta-D-GlcA-(1-&gt;3)-beta-D-Gal-(1-&gt;3)-beta-D-Gal-(1-&gt;4)-beta-D-Xyl}-L-seryl-[protein] + UDP + H(+)</text>
        <dbReference type="Rhea" id="RHEA:54996"/>
        <dbReference type="Rhea" id="RHEA-COMP:14060"/>
        <dbReference type="Rhea" id="RHEA-COMP:14061"/>
        <dbReference type="ChEBI" id="CHEBI:15378"/>
        <dbReference type="ChEBI" id="CHEBI:58052"/>
        <dbReference type="ChEBI" id="CHEBI:58223"/>
        <dbReference type="ChEBI" id="CHEBI:138444"/>
        <dbReference type="ChEBI" id="CHEBI:138445"/>
        <dbReference type="EC" id="2.4.1.226"/>
    </reaction>
    <physiologicalReaction direction="left-to-right" evidence="1">
        <dbReference type="Rhea" id="RHEA:54997"/>
    </physiologicalReaction>
</comment>
<comment type="cofactor">
    <cofactor evidence="1">
        <name>Mn(2+)</name>
        <dbReference type="ChEBI" id="CHEBI:29035"/>
    </cofactor>
    <cofactor evidence="1">
        <name>Co(2+)</name>
        <dbReference type="ChEBI" id="CHEBI:48828"/>
    </cofactor>
    <text evidence="1">Highest activities are measured with Mn(2+). Can also utilize Co(2+).</text>
</comment>
<comment type="subunit">
    <molecule>Isoform 1</molecule>
    <text evidence="1">Interacts with PRKN.</text>
</comment>
<comment type="subunit">
    <molecule>Isoform 2</molecule>
    <text evidence="1">Interacts with PRKN.</text>
</comment>
<comment type="subunit">
    <molecule>Isoform 3</molecule>
    <text evidence="1">Interacts with PRKN.</text>
</comment>
<comment type="interaction">
    <interactant intactId="EBI-9029659">
        <id>Q6IQX7-2</id>
    </interactant>
    <interactant intactId="EBI-973635">
        <id>Q9WVS6</id>
        <label>Prkn</label>
    </interactant>
    <organismsDiffer>false</organismsDiffer>
    <experiments>3</experiments>
</comment>
<comment type="subcellular location">
    <molecule>Isoform 1</molecule>
    <subcellularLocation>
        <location evidence="1">Golgi apparatus</location>
        <location evidence="1">Golgi stack membrane</location>
        <topology evidence="1">Single-pass type II membrane protein</topology>
    </subcellularLocation>
    <subcellularLocation>
        <location evidence="1">Cytoplasm</location>
        <location evidence="1">Cytosol</location>
    </subcellularLocation>
</comment>
<comment type="subcellular location">
    <molecule>Isoform 3</molecule>
    <subcellularLocation>
        <location evidence="1">Cytoplasm</location>
        <location evidence="1">Cytosol</location>
    </subcellularLocation>
    <subcellularLocation>
        <location evidence="1">Mitochondrion</location>
    </subcellularLocation>
</comment>
<comment type="subcellular location">
    <molecule>Isoform 2</molecule>
    <subcellularLocation>
        <location evidence="1">Mitochondrion matrix</location>
    </subcellularLocation>
</comment>
<comment type="alternative products">
    <event type="alternative splicing"/>
    <isoform>
        <id>Q6IQX7-1</id>
        <name>1</name>
        <sequence type="displayed"/>
    </isoform>
    <isoform>
        <id>Q6IQX7-2</id>
        <name>2</name>
        <name>Klokin1</name>
        <sequence type="described" ref="VSP_053435"/>
    </isoform>
    <isoform>
        <id>Q6IQX7-3</id>
        <name>3</name>
        <name>ChPF(D996)</name>
        <sequence type="described" ref="VSP_053436"/>
    </isoform>
</comment>
<comment type="tissue specificity">
    <text evidence="4">Isoform 1, isoform 2 and isoform 3 are expressed in brain (at protein level).</text>
</comment>
<comment type="similarity">
    <text evidence="5">Belongs to the chondroitin N-acetylgalactosaminyltransferase family.</text>
</comment>
<dbReference type="EC" id="2.4.1.175" evidence="1"/>
<dbReference type="EC" id="2.4.1.226" evidence="1"/>
<dbReference type="EMBL" id="AC115011">
    <property type="status" value="NOT_ANNOTATED_CDS"/>
    <property type="molecule type" value="Genomic_DNA"/>
</dbReference>
<dbReference type="EMBL" id="BC071273">
    <property type="protein sequence ID" value="AAH71273.1"/>
    <property type="molecule type" value="mRNA"/>
</dbReference>
<dbReference type="EMBL" id="BC057050">
    <property type="status" value="NOT_ANNOTATED_CDS"/>
    <property type="molecule type" value="mRNA"/>
</dbReference>
<dbReference type="EMBL" id="BC060598">
    <property type="status" value="NOT_ANNOTATED_CDS"/>
    <property type="molecule type" value="mRNA"/>
</dbReference>
<dbReference type="CCDS" id="CCDS15074.1">
    <molecule id="Q6IQX7-1"/>
</dbReference>
<dbReference type="CCDS" id="CCDS15075.1">
    <molecule id="Q6IQX7-3"/>
</dbReference>
<dbReference type="RefSeq" id="NP_001001565.1">
    <molecule id="Q6IQX7-3"/>
    <property type="nucleotide sequence ID" value="NM_001001565.2"/>
</dbReference>
<dbReference type="RefSeq" id="NP_001001566.1">
    <molecule id="Q6IQX7-1"/>
    <property type="nucleotide sequence ID" value="NM_001001566.3"/>
</dbReference>
<dbReference type="SMR" id="Q6IQX7"/>
<dbReference type="BioGRID" id="216600">
    <property type="interactions" value="3"/>
</dbReference>
<dbReference type="FunCoup" id="Q6IQX7">
    <property type="interactions" value="452"/>
</dbReference>
<dbReference type="IntAct" id="Q6IQX7">
    <property type="interactions" value="1"/>
</dbReference>
<dbReference type="STRING" id="10090.ENSMUSP00000078199"/>
<dbReference type="CAZy" id="GT31">
    <property type="family name" value="Glycosyltransferase Family 31"/>
</dbReference>
<dbReference type="CAZy" id="GT7">
    <property type="family name" value="Glycosyltransferase Family 7"/>
</dbReference>
<dbReference type="GlyCosmos" id="Q6IQX7">
    <property type="glycosylation" value="2 sites, No reported glycans"/>
</dbReference>
<dbReference type="GlyGen" id="Q6IQX7">
    <property type="glycosylation" value="3 sites, 2 N-linked glycans (3 sites)"/>
</dbReference>
<dbReference type="iPTMnet" id="Q6IQX7"/>
<dbReference type="PhosphoSitePlus" id="Q6IQX7"/>
<dbReference type="PaxDb" id="10090-ENSMUSP00000078199"/>
<dbReference type="PeptideAtlas" id="Q6IQX7"/>
<dbReference type="ProteomicsDB" id="283834">
    <molecule id="Q6IQX7-1"/>
</dbReference>
<dbReference type="ProteomicsDB" id="283835">
    <molecule id="Q6IQX7-2"/>
</dbReference>
<dbReference type="ProteomicsDB" id="283836">
    <molecule id="Q6IQX7-3"/>
</dbReference>
<dbReference type="Pumba" id="Q6IQX7"/>
<dbReference type="Antibodypedia" id="34339">
    <property type="antibodies" value="195 antibodies from 28 providers"/>
</dbReference>
<dbReference type="DNASU" id="74241"/>
<dbReference type="Ensembl" id="ENSMUST00000079205.14">
    <molecule id="Q6IQX7-1"/>
    <property type="protein sequence ID" value="ENSMUSP00000078199.8"/>
    <property type="gene ID" value="ENSMUSG00000032997.17"/>
</dbReference>
<dbReference type="Ensembl" id="ENSMUST00000094818.4">
    <molecule id="Q6IQX7-3"/>
    <property type="protein sequence ID" value="ENSMUSP00000092412.3"/>
    <property type="gene ID" value="ENSMUSG00000032997.17"/>
</dbReference>
<dbReference type="GeneID" id="74241"/>
<dbReference type="KEGG" id="mmu:74241"/>
<dbReference type="UCSC" id="uc007bph.1">
    <molecule id="Q6IQX7-1"/>
    <property type="organism name" value="mouse"/>
</dbReference>
<dbReference type="AGR" id="MGI:106576"/>
<dbReference type="CTD" id="79586"/>
<dbReference type="MGI" id="MGI:106576">
    <property type="gene designation" value="Chpf"/>
</dbReference>
<dbReference type="VEuPathDB" id="HostDB:ENSMUSG00000032997"/>
<dbReference type="eggNOG" id="KOG3708">
    <property type="taxonomic scope" value="Eukaryota"/>
</dbReference>
<dbReference type="GeneTree" id="ENSGT01050000244857"/>
<dbReference type="HOGENOM" id="CLU_016244_1_0_1"/>
<dbReference type="InParanoid" id="Q6IQX7"/>
<dbReference type="OMA" id="MEGKYCY"/>
<dbReference type="OrthoDB" id="9985088at2759"/>
<dbReference type="PhylomeDB" id="Q6IQX7"/>
<dbReference type="TreeFam" id="TF318303"/>
<dbReference type="BRENDA" id="2.4.1.175">
    <property type="organism ID" value="3474"/>
</dbReference>
<dbReference type="BRENDA" id="2.4.1.226">
    <property type="organism ID" value="3474"/>
</dbReference>
<dbReference type="Reactome" id="R-MMU-2022870">
    <property type="pathway name" value="Chondroitin sulfate biosynthesis"/>
</dbReference>
<dbReference type="BioGRID-ORCS" id="74241">
    <property type="hits" value="1 hit in 79 CRISPR screens"/>
</dbReference>
<dbReference type="PRO" id="PR:Q6IQX7"/>
<dbReference type="Proteomes" id="UP000000589">
    <property type="component" value="Chromosome 1"/>
</dbReference>
<dbReference type="RNAct" id="Q6IQX7">
    <property type="molecule type" value="protein"/>
</dbReference>
<dbReference type="Bgee" id="ENSMUSG00000032997">
    <property type="expression patterns" value="Expressed in CA3 field of hippocampus and 138 other cell types or tissues"/>
</dbReference>
<dbReference type="ExpressionAtlas" id="Q6IQX7">
    <property type="expression patterns" value="baseline and differential"/>
</dbReference>
<dbReference type="GO" id="GO:0005829">
    <property type="term" value="C:cytosol"/>
    <property type="evidence" value="ECO:0007669"/>
    <property type="project" value="UniProtKB-SubCell"/>
</dbReference>
<dbReference type="GO" id="GO:0005794">
    <property type="term" value="C:Golgi apparatus"/>
    <property type="evidence" value="ECO:0000314"/>
    <property type="project" value="MGI"/>
</dbReference>
<dbReference type="GO" id="GO:0032580">
    <property type="term" value="C:Golgi cisterna membrane"/>
    <property type="evidence" value="ECO:0007669"/>
    <property type="project" value="UniProtKB-SubCell"/>
</dbReference>
<dbReference type="GO" id="GO:0005759">
    <property type="term" value="C:mitochondrial matrix"/>
    <property type="evidence" value="ECO:0007669"/>
    <property type="project" value="UniProtKB-SubCell"/>
</dbReference>
<dbReference type="GO" id="GO:0047238">
    <property type="term" value="F:glucuronosyl-N-acetylgalactosaminyl-proteoglycan 4-beta-N-acetylgalactosaminyltransferase activity"/>
    <property type="evidence" value="ECO:0000316"/>
    <property type="project" value="MGI"/>
</dbReference>
<dbReference type="GO" id="GO:0016757">
    <property type="term" value="F:glycosyltransferase activity"/>
    <property type="evidence" value="ECO:0000315"/>
    <property type="project" value="MGI"/>
</dbReference>
<dbReference type="GO" id="GO:0046872">
    <property type="term" value="F:metal ion binding"/>
    <property type="evidence" value="ECO:0007669"/>
    <property type="project" value="UniProtKB-KW"/>
</dbReference>
<dbReference type="GO" id="GO:0050510">
    <property type="term" value="F:N-acetylgalactosaminyl-proteoglycan 3-beta-glucuronosyltransferase activity"/>
    <property type="evidence" value="ECO:0000316"/>
    <property type="project" value="MGI"/>
</dbReference>
<dbReference type="GO" id="GO:0050650">
    <property type="term" value="P:chondroitin sulfate proteoglycan biosynthetic process"/>
    <property type="evidence" value="ECO:0000315"/>
    <property type="project" value="MGI"/>
</dbReference>
<dbReference type="FunFam" id="3.90.550.50:FF:000004">
    <property type="entry name" value="Hexosyltransferase"/>
    <property type="match status" value="1"/>
</dbReference>
<dbReference type="Gene3D" id="3.90.550.50">
    <property type="match status" value="1"/>
</dbReference>
<dbReference type="InterPro" id="IPR008428">
    <property type="entry name" value="Chond_GalNAc"/>
</dbReference>
<dbReference type="InterPro" id="IPR051227">
    <property type="entry name" value="CS_glycosyltransferase"/>
</dbReference>
<dbReference type="PANTHER" id="PTHR12369:SF22">
    <property type="entry name" value="CHONDROITIN SULFATE SYNTHASE 2"/>
    <property type="match status" value="1"/>
</dbReference>
<dbReference type="PANTHER" id="PTHR12369">
    <property type="entry name" value="CHONDROITIN SYNTHASE"/>
    <property type="match status" value="1"/>
</dbReference>
<dbReference type="Pfam" id="PF05679">
    <property type="entry name" value="CHGN"/>
    <property type="match status" value="1"/>
</dbReference>
<keyword id="KW-0025">Alternative splicing</keyword>
<keyword id="KW-0963">Cytoplasm</keyword>
<keyword id="KW-0325">Glycoprotein</keyword>
<keyword id="KW-0333">Golgi apparatus</keyword>
<keyword id="KW-0472">Membrane</keyword>
<keyword id="KW-0479">Metal-binding</keyword>
<keyword id="KW-0496">Mitochondrion</keyword>
<keyword id="KW-1185">Reference proteome</keyword>
<keyword id="KW-0735">Signal-anchor</keyword>
<keyword id="KW-0808">Transferase</keyword>
<keyword id="KW-0812">Transmembrane</keyword>
<keyword id="KW-1133">Transmembrane helix</keyword>
<sequence>MRASLLLSVLRPAGPVAVGISLGFTLSLLSVTWVEEPCGPGPPQPGDSELPPRGNTNAARRPNSVQPGSERERPGAGAGTGESWEPRVLPYHPAQPGQATKKAVRTRYISTELGIRQKLLVAVLTSQATLPTLGVAVNRTLGHRLEHVVFLTGARGRRTPSGMAVVALGEERPIGHLHLALRHLLEQHGDDFDWFFLVPDATYTEAHGLDRLAGHLSLASATHLYLGRPQDFIGGDTTPGRYCHGGFGVLLSRTLLQQLRPHLESCRNDIVSARPDEWLGRCILDATGVGCTGDHEGMHYNYLELSPGEPVQEGDPRFRSALTAHPVRDPVHMYQLHKAFARAELDRTYQEIQELQWEIQNTSRLAADGERASAWPVGIPAPSRPASRFEVLRWDYFTEQYAFSCADGSPRCPLRGADQADVADVLGTALEELNRRYQPALQLQKQQLVNGYRRFDPARGMEYTLDLQLEALTPQGGRWPLTRRVQLLRPLSRVEILPVPYVTEASRLTVLLPLAAAERDLASGFLEAFATAALEPGDAAALTLLLLYEPRQAQRAAHSDVFAPVKAHVAELERRFPGARVPWLSVQTAAPSPLRLMDLLSKKHPLDTLFLLAGPDTVLTPDFLNRCRMHAISGWQAFFPMHFQAFHPAVAPPQGPGPPELGRDTGHFDRQAASEACFYNSDYVAARGRLVAASEQEEELLESLDVYELFLRFSNLHVLRAVEPALLQRYRAQPCSARLSEDLYHRCRQSVLEGLGSRTQLAMLLFEQEQGNST</sequence>
<proteinExistence type="evidence at protein level"/>
<reference key="1">
    <citation type="journal article" date="2009" name="PLoS Biol.">
        <title>Lineage-specific biology revealed by a finished genome assembly of the mouse.</title>
        <authorList>
            <person name="Church D.M."/>
            <person name="Goodstadt L."/>
            <person name="Hillier L.W."/>
            <person name="Zody M.C."/>
            <person name="Goldstein S."/>
            <person name="She X."/>
            <person name="Bult C.J."/>
            <person name="Agarwala R."/>
            <person name="Cherry J.L."/>
            <person name="DiCuccio M."/>
            <person name="Hlavina W."/>
            <person name="Kapustin Y."/>
            <person name="Meric P."/>
            <person name="Maglott D."/>
            <person name="Birtle Z."/>
            <person name="Marques A.C."/>
            <person name="Graves T."/>
            <person name="Zhou S."/>
            <person name="Teague B."/>
            <person name="Potamousis K."/>
            <person name="Churas C."/>
            <person name="Place M."/>
            <person name="Herschleb J."/>
            <person name="Runnheim R."/>
            <person name="Forrest D."/>
            <person name="Amos-Landgraf J."/>
            <person name="Schwartz D.C."/>
            <person name="Cheng Z."/>
            <person name="Lindblad-Toh K."/>
            <person name="Eichler E.E."/>
            <person name="Ponting C.P."/>
        </authorList>
    </citation>
    <scope>NUCLEOTIDE SEQUENCE [LARGE SCALE GENOMIC DNA]</scope>
    <source>
        <strain>C57BL/6J</strain>
    </source>
</reference>
<reference key="2">
    <citation type="journal article" date="2004" name="Genome Res.">
        <title>The status, quality, and expansion of the NIH full-length cDNA project: the Mammalian Gene Collection (MGC).</title>
        <authorList>
            <consortium name="The MGC Project Team"/>
        </authorList>
    </citation>
    <scope>NUCLEOTIDE SEQUENCE [LARGE SCALE MRNA] (ISOFORM 1)</scope>
    <source>
        <tissue>Embryo</tissue>
    </source>
</reference>
<reference key="3">
    <citation type="journal article" date="2012" name="Hum. Mol. Genet.">
        <title>Parkin interacts with Klokin1 for mitochondrial import and maintenance of membrane potential.</title>
        <authorList>
            <person name="Kuroda Y."/>
            <person name="Sako W."/>
            <person name="Goto S."/>
            <person name="Sawada T."/>
            <person name="Uchida D."/>
            <person name="Izumi Y."/>
            <person name="Takahashi T."/>
            <person name="Kagawa N."/>
            <person name="Matsumoto M."/>
            <person name="Matsumoto M."/>
            <person name="Takahashi R."/>
            <person name="Kaji R."/>
            <person name="Mitsui T."/>
        </authorList>
    </citation>
    <scope>ALTERNATIVE SPLICING (ISOFORMS 2 AND 3)</scope>
    <scope>INTERACTION WITH PRKN</scope>
    <scope>TISSUE SPECIFICITY</scope>
</reference>